<feature type="chain" id="PRO_1000187241" description="Heme A synthase">
    <location>
        <begin position="1"/>
        <end position="311"/>
    </location>
</feature>
<feature type="topological domain" description="Cytoplasmic" evidence="1">
    <location>
        <begin position="1"/>
        <end position="6"/>
    </location>
</feature>
<feature type="transmembrane region" description="Helical" evidence="1">
    <location>
        <begin position="7"/>
        <end position="27"/>
    </location>
</feature>
<feature type="topological domain" description="Extracellular" evidence="1">
    <location>
        <begin position="28"/>
        <end position="62"/>
    </location>
</feature>
<feature type="transmembrane region" description="Helical" evidence="1">
    <location>
        <begin position="63"/>
        <end position="83"/>
    </location>
</feature>
<feature type="topological domain" description="Cytoplasmic" evidence="1">
    <location>
        <begin position="84"/>
        <end position="91"/>
    </location>
</feature>
<feature type="transmembrane region" description="Helical" evidence="1">
    <location>
        <begin position="92"/>
        <end position="112"/>
    </location>
</feature>
<feature type="topological domain" description="Extracellular" evidence="1">
    <location>
        <begin position="113"/>
        <end position="121"/>
    </location>
</feature>
<feature type="transmembrane region" description="Helical" evidence="1">
    <location>
        <begin position="122"/>
        <end position="142"/>
    </location>
</feature>
<feature type="topological domain" description="Cytoplasmic" evidence="1">
    <location>
        <begin position="143"/>
        <end position="159"/>
    </location>
</feature>
<feature type="transmembrane region" description="Helical" evidence="1">
    <location>
        <begin position="160"/>
        <end position="180"/>
    </location>
</feature>
<feature type="topological domain" description="Extracellular" evidence="1">
    <location>
        <begin position="181"/>
        <end position="211"/>
    </location>
</feature>
<feature type="transmembrane region" description="Helical" evidence="1">
    <location>
        <begin position="212"/>
        <end position="232"/>
    </location>
</feature>
<feature type="topological domain" description="Cytoplasmic" evidence="1">
    <location>
        <begin position="233"/>
        <end position="243"/>
    </location>
</feature>
<feature type="transmembrane region" description="Helical" evidence="1">
    <location>
        <begin position="244"/>
        <end position="264"/>
    </location>
</feature>
<feature type="topological domain" description="Extracellular" evidence="1">
    <location>
        <begin position="265"/>
        <end position="271"/>
    </location>
</feature>
<feature type="transmembrane region" description="Helical" evidence="1">
    <location>
        <begin position="272"/>
        <end position="292"/>
    </location>
</feature>
<feature type="topological domain" description="Cytoplasmic" evidence="1">
    <location>
        <begin position="293"/>
        <end position="311"/>
    </location>
</feature>
<feature type="active site" evidence="1">
    <location>
        <position position="58"/>
    </location>
</feature>
<feature type="binding site" description="axial binding residue" evidence="1">
    <location>
        <position position="61"/>
    </location>
    <ligand>
        <name>heme o</name>
        <dbReference type="ChEBI" id="CHEBI:24480"/>
    </ligand>
    <ligandPart>
        <name>Fe</name>
        <dbReference type="ChEBI" id="CHEBI:18248"/>
    </ligandPart>
</feature>
<feature type="binding site" description="axial binding residue" evidence="1">
    <location>
        <position position="123"/>
    </location>
    <ligand>
        <name>heme o</name>
        <dbReference type="ChEBI" id="CHEBI:24480"/>
    </ligand>
    <ligandPart>
        <name>Fe</name>
        <dbReference type="ChEBI" id="CHEBI:18248"/>
    </ligandPart>
</feature>
<feature type="binding site" description="axial binding residue" evidence="1">
    <location>
        <position position="213"/>
    </location>
    <ligand>
        <name>heme b</name>
        <dbReference type="ChEBI" id="CHEBI:60344"/>
    </ligand>
    <ligandPart>
        <name>Fe</name>
        <dbReference type="ChEBI" id="CHEBI:18248"/>
    </ligandPart>
</feature>
<feature type="binding site" description="axial binding residue" evidence="1">
    <location>
        <position position="275"/>
    </location>
    <ligand>
        <name>heme b</name>
        <dbReference type="ChEBI" id="CHEBI:60344"/>
    </ligand>
    <ligandPart>
        <name>Fe</name>
        <dbReference type="ChEBI" id="CHEBI:18248"/>
    </ligandPart>
</feature>
<feature type="disulfide bond" description="Essential for catalytic activity" evidence="1">
    <location>
        <begin position="35"/>
        <end position="42"/>
    </location>
</feature>
<feature type="disulfide bond" evidence="1">
    <location>
        <begin position="189"/>
        <end position="195"/>
    </location>
</feature>
<keyword id="KW-1003">Cell membrane</keyword>
<keyword id="KW-1015">Disulfide bond</keyword>
<keyword id="KW-0350">Heme biosynthesis</keyword>
<keyword id="KW-0408">Iron</keyword>
<keyword id="KW-0472">Membrane</keyword>
<keyword id="KW-0479">Metal-binding</keyword>
<keyword id="KW-0560">Oxidoreductase</keyword>
<keyword id="KW-0812">Transmembrane</keyword>
<keyword id="KW-1133">Transmembrane helix</keyword>
<name>CTAA_BACCQ</name>
<reference key="1">
    <citation type="journal article" date="2009" name="J. Bacteriol.">
        <title>Complete genome sequence of the extremophilic Bacillus cereus strain Q1 with industrial applications.</title>
        <authorList>
            <person name="Xiong Z."/>
            <person name="Jiang Y."/>
            <person name="Qi D."/>
            <person name="Lu H."/>
            <person name="Yang F."/>
            <person name="Yang J."/>
            <person name="Chen L."/>
            <person name="Sun L."/>
            <person name="Xu X."/>
            <person name="Xue Y."/>
            <person name="Zhu Y."/>
            <person name="Jin Q."/>
        </authorList>
    </citation>
    <scope>NUCLEOTIDE SEQUENCE [LARGE SCALE GENOMIC DNA]</scope>
    <source>
        <strain>Q1</strain>
    </source>
</reference>
<evidence type="ECO:0000255" key="1">
    <source>
        <dbReference type="HAMAP-Rule" id="MF_01664"/>
    </source>
</evidence>
<gene>
    <name evidence="1" type="primary">ctaA</name>
    <name type="ordered locus">BCQ_3734</name>
</gene>
<comment type="function">
    <text evidence="1">Catalyzes the conversion of heme O to heme A by two successive hydroxylations of the methyl group at C8. The first hydroxylation forms heme I, the second hydroxylation results in an unstable dihydroxymethyl group, which spontaneously dehydrates, resulting in the formyl group of heme A.</text>
</comment>
<comment type="catalytic activity">
    <reaction evidence="1">
        <text>Fe(II)-heme o + 2 A + H2O = Fe(II)-heme a + 2 AH2</text>
        <dbReference type="Rhea" id="RHEA:63388"/>
        <dbReference type="ChEBI" id="CHEBI:13193"/>
        <dbReference type="ChEBI" id="CHEBI:15377"/>
        <dbReference type="ChEBI" id="CHEBI:17499"/>
        <dbReference type="ChEBI" id="CHEBI:60530"/>
        <dbReference type="ChEBI" id="CHEBI:61715"/>
        <dbReference type="EC" id="1.17.99.9"/>
    </reaction>
    <physiologicalReaction direction="left-to-right" evidence="1">
        <dbReference type="Rhea" id="RHEA:63389"/>
    </physiologicalReaction>
</comment>
<comment type="cofactor">
    <cofactor evidence="1">
        <name>heme b</name>
        <dbReference type="ChEBI" id="CHEBI:60344"/>
    </cofactor>
</comment>
<comment type="pathway">
    <text evidence="1">Porphyrin-containing compound metabolism; heme A biosynthesis; heme A from heme O: step 1/1.</text>
</comment>
<comment type="subunit">
    <text evidence="1">Interacts with CtaB.</text>
</comment>
<comment type="subcellular location">
    <subcellularLocation>
        <location evidence="1">Cell membrane</location>
        <topology evidence="1">Multi-pass membrane protein</topology>
    </subcellularLocation>
</comment>
<comment type="domain">
    <text evidence="1">The N-half (TM1-TM4) and C-half (TM5-TM8) domains are connected by an intracellular loop. Each domain is formed from four-helix bundles and they align in a pseudo twofold symmetry manner. The N-half domain is the substrate-heme O binding domain and the C-half domain is the cofactor heme B binding domain.</text>
</comment>
<comment type="domain">
    <text evidence="1">The cysteines of disulfide bond Cys-35 and Cys-42 may be involved in transfer of reducing equivalents from quinol in the membrane to the active site of the enzyme.</text>
</comment>
<comment type="similarity">
    <text evidence="1">Belongs to the COX15/CtaA family. Type 1 subfamily.</text>
</comment>
<dbReference type="EC" id="1.17.99.9" evidence="1"/>
<dbReference type="EMBL" id="CP000227">
    <property type="protein sequence ID" value="ACM14162.1"/>
    <property type="molecule type" value="Genomic_DNA"/>
</dbReference>
<dbReference type="SMR" id="B9IW25"/>
<dbReference type="KEGG" id="bcq:BCQ_3734"/>
<dbReference type="HOGENOM" id="CLU_041525_3_1_9"/>
<dbReference type="UniPathway" id="UPA00269">
    <property type="reaction ID" value="UER00713"/>
</dbReference>
<dbReference type="Proteomes" id="UP000000441">
    <property type="component" value="Chromosome"/>
</dbReference>
<dbReference type="GO" id="GO:0005886">
    <property type="term" value="C:plasma membrane"/>
    <property type="evidence" value="ECO:0007669"/>
    <property type="project" value="UniProtKB-SubCell"/>
</dbReference>
<dbReference type="GO" id="GO:0046872">
    <property type="term" value="F:metal ion binding"/>
    <property type="evidence" value="ECO:0007669"/>
    <property type="project" value="UniProtKB-KW"/>
</dbReference>
<dbReference type="GO" id="GO:0016653">
    <property type="term" value="F:oxidoreductase activity, acting on NAD(P)H, heme protein as acceptor"/>
    <property type="evidence" value="ECO:0007669"/>
    <property type="project" value="InterPro"/>
</dbReference>
<dbReference type="GO" id="GO:0006784">
    <property type="term" value="P:heme A biosynthetic process"/>
    <property type="evidence" value="ECO:0007669"/>
    <property type="project" value="UniProtKB-UniRule"/>
</dbReference>
<dbReference type="HAMAP" id="MF_01664">
    <property type="entry name" value="HemeA_synth_type1"/>
    <property type="match status" value="1"/>
</dbReference>
<dbReference type="InterPro" id="IPR003780">
    <property type="entry name" value="COX15/CtaA_fam"/>
</dbReference>
<dbReference type="InterPro" id="IPR050450">
    <property type="entry name" value="COX15/CtaA_HemeA_synthase"/>
</dbReference>
<dbReference type="InterPro" id="IPR023755">
    <property type="entry name" value="HemeA_Synthase_type1"/>
</dbReference>
<dbReference type="PANTHER" id="PTHR35457">
    <property type="entry name" value="HEME A SYNTHASE"/>
    <property type="match status" value="1"/>
</dbReference>
<dbReference type="PANTHER" id="PTHR35457:SF1">
    <property type="entry name" value="HEME A SYNTHASE"/>
    <property type="match status" value="1"/>
</dbReference>
<dbReference type="Pfam" id="PF02628">
    <property type="entry name" value="COX15-CtaA"/>
    <property type="match status" value="1"/>
</dbReference>
<protein>
    <recommendedName>
        <fullName evidence="1">Heme A synthase</fullName>
        <shortName evidence="1">HAS</shortName>
        <ecNumber evidence="1">1.17.99.9</ecNumber>
    </recommendedName>
    <alternativeName>
        <fullName evidence="1">Cytochrome aa3-controlling protein</fullName>
    </alternativeName>
</protein>
<sequence>MQRFIKWLAVITSLDLLIVLLGGALVTKTGSGQGCGKSWPLCNGEFVPSNLSMETIIELSHRLTSGSAGILVTLLCILSWKYYKHVRETKTLAILSFVFLVAQALMGAAAVVWGQMPAVLAIHFGISLISFASVILLTCLIFEIDQKFDARSLIMDKKMKFHIYGVTIYSYIVVYTGALVRHERASLACPDFPLCSKNRPMPTQLHEWVQMGHRVAAMLIFAWILYAMILAIRHYKQQPVVYWGWIISFILVTLQAIVGILVVFTNASLSMALLHSLFISCLFAVLCYLVMLGTRSKVNAKEAASISKQTK</sequence>
<organism>
    <name type="scientific">Bacillus cereus (strain Q1)</name>
    <dbReference type="NCBI Taxonomy" id="361100"/>
    <lineage>
        <taxon>Bacteria</taxon>
        <taxon>Bacillati</taxon>
        <taxon>Bacillota</taxon>
        <taxon>Bacilli</taxon>
        <taxon>Bacillales</taxon>
        <taxon>Bacillaceae</taxon>
        <taxon>Bacillus</taxon>
        <taxon>Bacillus cereus group</taxon>
    </lineage>
</organism>
<proteinExistence type="inferred from homology"/>
<accession>B9IW25</accession>